<name>AATE_THEKO</name>
<accession>Q5JDS0</accession>
<dbReference type="EMBL" id="AP006878">
    <property type="protein sequence ID" value="BAD85788.1"/>
    <property type="molecule type" value="Genomic_DNA"/>
</dbReference>
<dbReference type="RefSeq" id="WP_011250550.1">
    <property type="nucleotide sequence ID" value="NC_006624.1"/>
</dbReference>
<dbReference type="SMR" id="Q5JDS0"/>
<dbReference type="FunCoup" id="Q5JDS0">
    <property type="interactions" value="16"/>
</dbReference>
<dbReference type="STRING" id="69014.TK1599"/>
<dbReference type="EnsemblBacteria" id="BAD85788">
    <property type="protein sequence ID" value="BAD85788"/>
    <property type="gene ID" value="TK1599"/>
</dbReference>
<dbReference type="GeneID" id="78448127"/>
<dbReference type="KEGG" id="tko:TK1599"/>
<dbReference type="PATRIC" id="fig|69014.16.peg.1558"/>
<dbReference type="eggNOG" id="arCOG00869">
    <property type="taxonomic scope" value="Archaea"/>
</dbReference>
<dbReference type="HOGENOM" id="CLU_105846_1_0_2"/>
<dbReference type="InParanoid" id="Q5JDS0"/>
<dbReference type="OrthoDB" id="4691at2157"/>
<dbReference type="PhylomeDB" id="Q5JDS0"/>
<dbReference type="Proteomes" id="UP000000536">
    <property type="component" value="Chromosome"/>
</dbReference>
<dbReference type="GO" id="GO:0005886">
    <property type="term" value="C:plasma membrane"/>
    <property type="evidence" value="ECO:0007669"/>
    <property type="project" value="UniProtKB-SubCell"/>
</dbReference>
<dbReference type="GO" id="GO:0033178">
    <property type="term" value="C:proton-transporting two-sector ATPase complex, catalytic domain"/>
    <property type="evidence" value="ECO:0007669"/>
    <property type="project" value="InterPro"/>
</dbReference>
<dbReference type="GO" id="GO:0005524">
    <property type="term" value="F:ATP binding"/>
    <property type="evidence" value="ECO:0007669"/>
    <property type="project" value="UniProtKB-UniRule"/>
</dbReference>
<dbReference type="GO" id="GO:0046933">
    <property type="term" value="F:proton-transporting ATP synthase activity, rotational mechanism"/>
    <property type="evidence" value="ECO:0007669"/>
    <property type="project" value="UniProtKB-UniRule"/>
</dbReference>
<dbReference type="GO" id="GO:0046961">
    <property type="term" value="F:proton-transporting ATPase activity, rotational mechanism"/>
    <property type="evidence" value="ECO:0000318"/>
    <property type="project" value="GO_Central"/>
</dbReference>
<dbReference type="GO" id="GO:0042777">
    <property type="term" value="P:proton motive force-driven plasma membrane ATP synthesis"/>
    <property type="evidence" value="ECO:0007669"/>
    <property type="project" value="UniProtKB-UniRule"/>
</dbReference>
<dbReference type="CDD" id="cd06503">
    <property type="entry name" value="ATP-synt_Fo_b"/>
    <property type="match status" value="1"/>
</dbReference>
<dbReference type="Gene3D" id="3.30.2320.30">
    <property type="entry name" value="ATP synthase, E subunit, C-terminal"/>
    <property type="match status" value="1"/>
</dbReference>
<dbReference type="Gene3D" id="1.20.5.620">
    <property type="entry name" value="F1F0 ATP synthase subunit B, membrane domain"/>
    <property type="match status" value="1"/>
</dbReference>
<dbReference type="HAMAP" id="MF_00311">
    <property type="entry name" value="ATP_synth_E_arch"/>
    <property type="match status" value="1"/>
</dbReference>
<dbReference type="InterPro" id="IPR028987">
    <property type="entry name" value="ATP_synth_B-like_membr_sf"/>
</dbReference>
<dbReference type="InterPro" id="IPR038495">
    <property type="entry name" value="ATPase_E_C"/>
</dbReference>
<dbReference type="InterPro" id="IPR002842">
    <property type="entry name" value="ATPase_V1_Esu"/>
</dbReference>
<dbReference type="NCBIfam" id="NF003049">
    <property type="entry name" value="PRK03963.1"/>
    <property type="match status" value="1"/>
</dbReference>
<dbReference type="PANTHER" id="PTHR45715">
    <property type="entry name" value="ATPASE H+-TRANSPORTING V1 SUBUNIT E1A-RELATED"/>
    <property type="match status" value="1"/>
</dbReference>
<dbReference type="Pfam" id="PF01991">
    <property type="entry name" value="vATP-synt_E"/>
    <property type="match status" value="1"/>
</dbReference>
<dbReference type="SUPFAM" id="SSF81573">
    <property type="entry name" value="F1F0 ATP synthase subunit B, membrane domain"/>
    <property type="match status" value="1"/>
</dbReference>
<dbReference type="SUPFAM" id="SSF160527">
    <property type="entry name" value="V-type ATPase subunit E-like"/>
    <property type="match status" value="1"/>
</dbReference>
<keyword id="KW-0066">ATP synthesis</keyword>
<keyword id="KW-1003">Cell membrane</keyword>
<keyword id="KW-0375">Hydrogen ion transport</keyword>
<keyword id="KW-0406">Ion transport</keyword>
<keyword id="KW-0472">Membrane</keyword>
<keyword id="KW-1185">Reference proteome</keyword>
<keyword id="KW-0813">Transport</keyword>
<gene>
    <name evidence="1" type="primary">atpE</name>
    <name type="ordered locus">TK1599</name>
</gene>
<evidence type="ECO:0000255" key="1">
    <source>
        <dbReference type="HAMAP-Rule" id="MF_00311"/>
    </source>
</evidence>
<comment type="function">
    <text evidence="1">Component of the A-type ATP synthase that produces ATP from ADP in the presence of a proton gradient across the membrane.</text>
</comment>
<comment type="subunit">
    <text evidence="1">Has multiple subunits with at least A(3), B(3), C, D, E, F, H, I and proteolipid K(x).</text>
</comment>
<comment type="subcellular location">
    <subcellularLocation>
        <location evidence="1">Cell membrane</location>
        <topology evidence="1">Peripheral membrane protein</topology>
    </subcellularLocation>
</comment>
<comment type="similarity">
    <text evidence="1">Belongs to the V-ATPase E subunit family.</text>
</comment>
<reference key="1">
    <citation type="journal article" date="2005" name="Genome Res.">
        <title>Complete genome sequence of the hyperthermophilic archaeon Thermococcus kodakaraensis KOD1 and comparison with Pyrococcus genomes.</title>
        <authorList>
            <person name="Fukui T."/>
            <person name="Atomi H."/>
            <person name="Kanai T."/>
            <person name="Matsumi R."/>
            <person name="Fujiwara S."/>
            <person name="Imanaka T."/>
        </authorList>
    </citation>
    <scope>NUCLEOTIDE SEQUENCE [LARGE SCALE GENOMIC DNA]</scope>
    <source>
        <strain>ATCC BAA-918 / JCM 12380 / KOD1</strain>
    </source>
</reference>
<proteinExistence type="inferred from homology"/>
<feature type="chain" id="PRO_0000117323" description="A-type ATP synthase subunit E">
    <location>
        <begin position="1"/>
        <end position="203"/>
    </location>
</feature>
<protein>
    <recommendedName>
        <fullName evidence="1">A-type ATP synthase subunit E</fullName>
    </recommendedName>
</protein>
<sequence>MEGAELIIQEINREAEQKIQYILSEAQKEAEKIKEEARKRAEDRAQWILRKAKTQAEMEKQRAIASARLEVRKKRLEVQEEMIRAVLSALRERLASLPADEYFQTLVTLTTEALEELNIDSAVVRSNEETLKLIVEKLPEFKKSVSEKLGKEVEITVGEPISTIGGVLVESSDGSVRVDNTFEARIERLEADLRARIAKALFG</sequence>
<organism>
    <name type="scientific">Thermococcus kodakarensis (strain ATCC BAA-918 / JCM 12380 / KOD1)</name>
    <name type="common">Pyrococcus kodakaraensis (strain KOD1)</name>
    <dbReference type="NCBI Taxonomy" id="69014"/>
    <lineage>
        <taxon>Archaea</taxon>
        <taxon>Methanobacteriati</taxon>
        <taxon>Methanobacteriota</taxon>
        <taxon>Thermococci</taxon>
        <taxon>Thermococcales</taxon>
        <taxon>Thermococcaceae</taxon>
        <taxon>Thermococcus</taxon>
    </lineage>
</organism>